<protein>
    <recommendedName>
        <fullName>Transposase for insertion sequence element IS1081</fullName>
    </recommendedName>
</protein>
<accession>P60230</accession>
<accession>L0T7K9</accession>
<accession>P35882</accession>
<keyword id="KW-0233">DNA recombination</keyword>
<keyword id="KW-0238">DNA-binding</keyword>
<keyword id="KW-1185">Reference proteome</keyword>
<keyword id="KW-0814">Transposable element</keyword>
<keyword id="KW-0815">Transposition</keyword>
<feature type="chain" id="PRO_0000211350" description="Transposase for insertion sequence element IS1081">
    <location>
        <begin position="1"/>
        <end position="415"/>
    </location>
</feature>
<gene>
    <name type="ordered locus">Rv1199c</name>
    <name type="ORF">MTCI364.11c</name>
</gene>
<gene>
    <name type="ordered locus">Rv2512c</name>
    <name type="ORF">MTCY07A7.18c</name>
</gene>
<sequence>MTSSHLIDTEQLLADQLAQASPDLLRGLLSTFIAALMGAEADALCGAGYRERSDERSNQRNGYRHRDFDTRAATIDVAIPKLRQGSYFPDWLLQRRKRAERALTSVVATCYLLGVSTRRMERLVETLGVTKLSKSQVSIMAKELDEAVEAFRTRPLDAGPYTFLAADALVLKVREAGRVVGVHTLIATGVNAEGYREILGIQVTSAEDGAGWLAFFRDLVARGLSGVALVTSDAHAGLVAAIGATLPAAAWQRCRTHYAANLMAATPKPSWPWVRTLLHSIYDQPDAESVVAQYDRVLDALTDKLPAVAEHLDTARTDLLAFTAFPKQIWRQIWSNNPQERLNREVRRRTDVVGIFPDRASIIRLVGAVLAEQHDEWIEGRRYLGLEVLTRARAALTSTEEPAKQQTTNTPALTT</sequence>
<proteinExistence type="inferred from homology"/>
<organism>
    <name type="scientific">Mycobacterium tuberculosis (strain ATCC 25618 / H37Rv)</name>
    <dbReference type="NCBI Taxonomy" id="83332"/>
    <lineage>
        <taxon>Bacteria</taxon>
        <taxon>Bacillati</taxon>
        <taxon>Actinomycetota</taxon>
        <taxon>Actinomycetes</taxon>
        <taxon>Mycobacteriales</taxon>
        <taxon>Mycobacteriaceae</taxon>
        <taxon>Mycobacterium</taxon>
        <taxon>Mycobacterium tuberculosis complex</taxon>
    </lineage>
</organism>
<comment type="function">
    <text>Required for the transposition of the insertion element.</text>
</comment>
<comment type="similarity">
    <text evidence="1">Belongs to the transposase mutator family.</text>
</comment>
<reference key="1">
    <citation type="journal article" date="1998" name="Nature">
        <title>Deciphering the biology of Mycobacterium tuberculosis from the complete genome sequence.</title>
        <authorList>
            <person name="Cole S.T."/>
            <person name="Brosch R."/>
            <person name="Parkhill J."/>
            <person name="Garnier T."/>
            <person name="Churcher C.M."/>
            <person name="Harris D.E."/>
            <person name="Gordon S.V."/>
            <person name="Eiglmeier K."/>
            <person name="Gas S."/>
            <person name="Barry C.E. III"/>
            <person name="Tekaia F."/>
            <person name="Badcock K."/>
            <person name="Basham D."/>
            <person name="Brown D."/>
            <person name="Chillingworth T."/>
            <person name="Connor R."/>
            <person name="Davies R.M."/>
            <person name="Devlin K."/>
            <person name="Feltwell T."/>
            <person name="Gentles S."/>
            <person name="Hamlin N."/>
            <person name="Holroyd S."/>
            <person name="Hornsby T."/>
            <person name="Jagels K."/>
            <person name="Krogh A."/>
            <person name="McLean J."/>
            <person name="Moule S."/>
            <person name="Murphy L.D."/>
            <person name="Oliver S."/>
            <person name="Osborne J."/>
            <person name="Quail M.A."/>
            <person name="Rajandream M.A."/>
            <person name="Rogers J."/>
            <person name="Rutter S."/>
            <person name="Seeger K."/>
            <person name="Skelton S."/>
            <person name="Squares S."/>
            <person name="Squares R."/>
            <person name="Sulston J.E."/>
            <person name="Taylor K."/>
            <person name="Whitehead S."/>
            <person name="Barrell B.G."/>
        </authorList>
    </citation>
    <scope>NUCLEOTIDE SEQUENCE [LARGE SCALE GENOMIC DNA]</scope>
    <source>
        <strain>ATCC 25618 / H37Rv</strain>
    </source>
</reference>
<name>TRA1_MYCTU</name>
<evidence type="ECO:0000305" key="1"/>
<dbReference type="EMBL" id="AL123456">
    <property type="protein sequence ID" value="CCP43955.1"/>
    <property type="molecule type" value="Genomic_DNA"/>
</dbReference>
<dbReference type="EMBL" id="AL123456">
    <property type="protein sequence ID" value="CCP45306.1"/>
    <property type="molecule type" value="Genomic_DNA"/>
</dbReference>
<dbReference type="RefSeq" id="NP_215715.1">
    <property type="nucleotide sequence ID" value="NC_000962.3"/>
</dbReference>
<dbReference type="RefSeq" id="NP_217028.1">
    <property type="nucleotide sequence ID" value="NC_000962.3"/>
</dbReference>
<dbReference type="RefSeq" id="WP_003904572.1">
    <property type="nucleotide sequence ID" value="NZ_KK339370.1"/>
</dbReference>
<dbReference type="SMR" id="P60230"/>
<dbReference type="STRING" id="83332.Rv1199c"/>
<dbReference type="PaxDb" id="83332-Rv1199c"/>
<dbReference type="DNASU" id="23492655"/>
<dbReference type="DNASU" id="886092"/>
<dbReference type="DNASU" id="888515"/>
<dbReference type="GeneID" id="886092"/>
<dbReference type="GeneID" id="888515"/>
<dbReference type="KEGG" id="mtu:Rv1199c"/>
<dbReference type="KEGG" id="mtu:Rv2512c"/>
<dbReference type="KEGG" id="mtv:RVBD_1199c"/>
<dbReference type="KEGG" id="mtv:RVBD_2512c"/>
<dbReference type="TubercuList" id="Rv1199c"/>
<dbReference type="TubercuList" id="Rv2512c"/>
<dbReference type="eggNOG" id="COG3328">
    <property type="taxonomic scope" value="Bacteria"/>
</dbReference>
<dbReference type="InParanoid" id="P60230"/>
<dbReference type="OrthoDB" id="9793302at2"/>
<dbReference type="PhylomeDB" id="P60230"/>
<dbReference type="Proteomes" id="UP000001584">
    <property type="component" value="Chromosome"/>
</dbReference>
<dbReference type="GO" id="GO:0003677">
    <property type="term" value="F:DNA binding"/>
    <property type="evidence" value="ECO:0007669"/>
    <property type="project" value="UniProtKB-KW"/>
</dbReference>
<dbReference type="GO" id="GO:0004803">
    <property type="term" value="F:transposase activity"/>
    <property type="evidence" value="ECO:0007669"/>
    <property type="project" value="InterPro"/>
</dbReference>
<dbReference type="GO" id="GO:0006313">
    <property type="term" value="P:DNA transposition"/>
    <property type="evidence" value="ECO:0007669"/>
    <property type="project" value="InterPro"/>
</dbReference>
<dbReference type="InterPro" id="IPR001207">
    <property type="entry name" value="Transposase_mutator"/>
</dbReference>
<dbReference type="NCBIfam" id="NF033543">
    <property type="entry name" value="transpos_IS256"/>
    <property type="match status" value="1"/>
</dbReference>
<dbReference type="PANTHER" id="PTHR33217">
    <property type="entry name" value="TRANSPOSASE FOR INSERTION SEQUENCE ELEMENT IS1081"/>
    <property type="match status" value="1"/>
</dbReference>
<dbReference type="PANTHER" id="PTHR33217:SF7">
    <property type="entry name" value="TRANSPOSASE FOR INSERTION SEQUENCE ELEMENT IS1081"/>
    <property type="match status" value="1"/>
</dbReference>
<dbReference type="Pfam" id="PF00872">
    <property type="entry name" value="Transposase_mut"/>
    <property type="match status" value="1"/>
</dbReference>
<dbReference type="PROSITE" id="PS01007">
    <property type="entry name" value="TRANSPOSASE_MUTATOR"/>
    <property type="match status" value="1"/>
</dbReference>